<gene>
    <name evidence="1" type="primary">rpsS</name>
    <name type="ordered locus">Aflv_0109</name>
</gene>
<feature type="chain" id="PRO_1000127924" description="Small ribosomal subunit protein uS19">
    <location>
        <begin position="1"/>
        <end position="92"/>
    </location>
</feature>
<proteinExistence type="inferred from homology"/>
<accession>B7GJ71</accession>
<keyword id="KW-0687">Ribonucleoprotein</keyword>
<keyword id="KW-0689">Ribosomal protein</keyword>
<keyword id="KW-0694">RNA-binding</keyword>
<keyword id="KW-0699">rRNA-binding</keyword>
<name>RS19_ANOFW</name>
<reference key="1">
    <citation type="journal article" date="2008" name="Genome Biol.">
        <title>Encapsulated in silica: genome, proteome and physiology of the thermophilic bacterium Anoxybacillus flavithermus WK1.</title>
        <authorList>
            <person name="Saw J.H."/>
            <person name="Mountain B.W."/>
            <person name="Feng L."/>
            <person name="Omelchenko M.V."/>
            <person name="Hou S."/>
            <person name="Saito J.A."/>
            <person name="Stott M.B."/>
            <person name="Li D."/>
            <person name="Zhao G."/>
            <person name="Wu J."/>
            <person name="Galperin M.Y."/>
            <person name="Koonin E.V."/>
            <person name="Makarova K.S."/>
            <person name="Wolf Y.I."/>
            <person name="Rigden D.J."/>
            <person name="Dunfield P.F."/>
            <person name="Wang L."/>
            <person name="Alam M."/>
        </authorList>
    </citation>
    <scope>NUCLEOTIDE SEQUENCE [LARGE SCALE GENOMIC DNA]</scope>
    <source>
        <strain>DSM 21510 / WK1</strain>
    </source>
</reference>
<protein>
    <recommendedName>
        <fullName evidence="1">Small ribosomal subunit protein uS19</fullName>
    </recommendedName>
    <alternativeName>
        <fullName evidence="2">30S ribosomal protein S19</fullName>
    </alternativeName>
</protein>
<organism>
    <name type="scientific">Anoxybacillus flavithermus (strain DSM 21510 / WK1)</name>
    <dbReference type="NCBI Taxonomy" id="491915"/>
    <lineage>
        <taxon>Bacteria</taxon>
        <taxon>Bacillati</taxon>
        <taxon>Bacillota</taxon>
        <taxon>Bacilli</taxon>
        <taxon>Bacillales</taxon>
        <taxon>Anoxybacillaceae</taxon>
        <taxon>Anoxybacillus</taxon>
    </lineage>
</organism>
<evidence type="ECO:0000255" key="1">
    <source>
        <dbReference type="HAMAP-Rule" id="MF_00531"/>
    </source>
</evidence>
<evidence type="ECO:0000305" key="2"/>
<sequence length="92" mass="10600">MGRSLKKGPFCDDHLMKKIEKLNETGQKQVIKTWSRRSTIFPQFIGHTIAVYDGRKHVPVYITEDMVGHKLGEFAPTRTYKGHAADDKKTKR</sequence>
<dbReference type="EMBL" id="CP000922">
    <property type="protein sequence ID" value="ACJ32493.1"/>
    <property type="molecule type" value="Genomic_DNA"/>
</dbReference>
<dbReference type="RefSeq" id="WP_004888674.1">
    <property type="nucleotide sequence ID" value="NC_011567.1"/>
</dbReference>
<dbReference type="SMR" id="B7GJ71"/>
<dbReference type="STRING" id="491915.Aflv_0109"/>
<dbReference type="GeneID" id="7036308"/>
<dbReference type="KEGG" id="afl:Aflv_0109"/>
<dbReference type="eggNOG" id="COG0185">
    <property type="taxonomic scope" value="Bacteria"/>
</dbReference>
<dbReference type="HOGENOM" id="CLU_144911_0_1_9"/>
<dbReference type="Proteomes" id="UP000000742">
    <property type="component" value="Chromosome"/>
</dbReference>
<dbReference type="GO" id="GO:0005737">
    <property type="term" value="C:cytoplasm"/>
    <property type="evidence" value="ECO:0007669"/>
    <property type="project" value="UniProtKB-ARBA"/>
</dbReference>
<dbReference type="GO" id="GO:0015935">
    <property type="term" value="C:small ribosomal subunit"/>
    <property type="evidence" value="ECO:0007669"/>
    <property type="project" value="InterPro"/>
</dbReference>
<dbReference type="GO" id="GO:0019843">
    <property type="term" value="F:rRNA binding"/>
    <property type="evidence" value="ECO:0007669"/>
    <property type="project" value="UniProtKB-UniRule"/>
</dbReference>
<dbReference type="GO" id="GO:0003735">
    <property type="term" value="F:structural constituent of ribosome"/>
    <property type="evidence" value="ECO:0007669"/>
    <property type="project" value="InterPro"/>
</dbReference>
<dbReference type="GO" id="GO:0000028">
    <property type="term" value="P:ribosomal small subunit assembly"/>
    <property type="evidence" value="ECO:0007669"/>
    <property type="project" value="TreeGrafter"/>
</dbReference>
<dbReference type="GO" id="GO:0006412">
    <property type="term" value="P:translation"/>
    <property type="evidence" value="ECO:0007669"/>
    <property type="project" value="UniProtKB-UniRule"/>
</dbReference>
<dbReference type="FunFam" id="3.30.860.10:FF:000001">
    <property type="entry name" value="30S ribosomal protein S19"/>
    <property type="match status" value="1"/>
</dbReference>
<dbReference type="Gene3D" id="3.30.860.10">
    <property type="entry name" value="30s Ribosomal Protein S19, Chain A"/>
    <property type="match status" value="1"/>
</dbReference>
<dbReference type="HAMAP" id="MF_00531">
    <property type="entry name" value="Ribosomal_uS19"/>
    <property type="match status" value="1"/>
</dbReference>
<dbReference type="InterPro" id="IPR002222">
    <property type="entry name" value="Ribosomal_uS19"/>
</dbReference>
<dbReference type="InterPro" id="IPR005732">
    <property type="entry name" value="Ribosomal_uS19_bac-type"/>
</dbReference>
<dbReference type="InterPro" id="IPR020934">
    <property type="entry name" value="Ribosomal_uS19_CS"/>
</dbReference>
<dbReference type="InterPro" id="IPR023575">
    <property type="entry name" value="Ribosomal_uS19_SF"/>
</dbReference>
<dbReference type="NCBIfam" id="TIGR01050">
    <property type="entry name" value="rpsS_bact"/>
    <property type="match status" value="1"/>
</dbReference>
<dbReference type="PANTHER" id="PTHR11880">
    <property type="entry name" value="RIBOSOMAL PROTEIN S19P FAMILY MEMBER"/>
    <property type="match status" value="1"/>
</dbReference>
<dbReference type="PANTHER" id="PTHR11880:SF8">
    <property type="entry name" value="SMALL RIBOSOMAL SUBUNIT PROTEIN US19M"/>
    <property type="match status" value="1"/>
</dbReference>
<dbReference type="Pfam" id="PF00203">
    <property type="entry name" value="Ribosomal_S19"/>
    <property type="match status" value="1"/>
</dbReference>
<dbReference type="PIRSF" id="PIRSF002144">
    <property type="entry name" value="Ribosomal_S19"/>
    <property type="match status" value="1"/>
</dbReference>
<dbReference type="PRINTS" id="PR00975">
    <property type="entry name" value="RIBOSOMALS19"/>
</dbReference>
<dbReference type="SUPFAM" id="SSF54570">
    <property type="entry name" value="Ribosomal protein S19"/>
    <property type="match status" value="1"/>
</dbReference>
<dbReference type="PROSITE" id="PS00323">
    <property type="entry name" value="RIBOSOMAL_S19"/>
    <property type="match status" value="1"/>
</dbReference>
<comment type="function">
    <text evidence="1">Protein S19 forms a complex with S13 that binds strongly to the 16S ribosomal RNA.</text>
</comment>
<comment type="similarity">
    <text evidence="1">Belongs to the universal ribosomal protein uS19 family.</text>
</comment>